<gene>
    <name evidence="1" type="primary">rplW</name>
    <name type="ordered locus">SPO3823</name>
</gene>
<dbReference type="EMBL" id="CP000031">
    <property type="protein sequence ID" value="AAV97037.1"/>
    <property type="molecule type" value="Genomic_DNA"/>
</dbReference>
<dbReference type="RefSeq" id="WP_011049495.1">
    <property type="nucleotide sequence ID" value="NC_003911.12"/>
</dbReference>
<dbReference type="SMR" id="Q5LLU8"/>
<dbReference type="STRING" id="246200.SPO3823"/>
<dbReference type="PaxDb" id="246200-SPO3823"/>
<dbReference type="KEGG" id="sil:SPO3823"/>
<dbReference type="eggNOG" id="COG0089">
    <property type="taxonomic scope" value="Bacteria"/>
</dbReference>
<dbReference type="HOGENOM" id="CLU_037562_3_1_5"/>
<dbReference type="OrthoDB" id="9793353at2"/>
<dbReference type="Proteomes" id="UP000001023">
    <property type="component" value="Chromosome"/>
</dbReference>
<dbReference type="GO" id="GO:1990904">
    <property type="term" value="C:ribonucleoprotein complex"/>
    <property type="evidence" value="ECO:0007669"/>
    <property type="project" value="UniProtKB-KW"/>
</dbReference>
<dbReference type="GO" id="GO:0005840">
    <property type="term" value="C:ribosome"/>
    <property type="evidence" value="ECO:0007669"/>
    <property type="project" value="UniProtKB-KW"/>
</dbReference>
<dbReference type="GO" id="GO:0019843">
    <property type="term" value="F:rRNA binding"/>
    <property type="evidence" value="ECO:0007669"/>
    <property type="project" value="UniProtKB-UniRule"/>
</dbReference>
<dbReference type="GO" id="GO:0003735">
    <property type="term" value="F:structural constituent of ribosome"/>
    <property type="evidence" value="ECO:0007669"/>
    <property type="project" value="InterPro"/>
</dbReference>
<dbReference type="GO" id="GO:0006412">
    <property type="term" value="P:translation"/>
    <property type="evidence" value="ECO:0007669"/>
    <property type="project" value="UniProtKB-UniRule"/>
</dbReference>
<dbReference type="FunFam" id="3.30.70.330:FF:000001">
    <property type="entry name" value="50S ribosomal protein L23"/>
    <property type="match status" value="1"/>
</dbReference>
<dbReference type="Gene3D" id="3.30.70.330">
    <property type="match status" value="1"/>
</dbReference>
<dbReference type="HAMAP" id="MF_01369_B">
    <property type="entry name" value="Ribosomal_uL23_B"/>
    <property type="match status" value="1"/>
</dbReference>
<dbReference type="InterPro" id="IPR012677">
    <property type="entry name" value="Nucleotide-bd_a/b_plait_sf"/>
</dbReference>
<dbReference type="InterPro" id="IPR013025">
    <property type="entry name" value="Ribosomal_uL23-like"/>
</dbReference>
<dbReference type="InterPro" id="IPR012678">
    <property type="entry name" value="Ribosomal_uL23/eL15/eS24_sf"/>
</dbReference>
<dbReference type="NCBIfam" id="NF004359">
    <property type="entry name" value="PRK05738.1-3"/>
    <property type="match status" value="1"/>
</dbReference>
<dbReference type="NCBIfam" id="NF004360">
    <property type="entry name" value="PRK05738.1-5"/>
    <property type="match status" value="1"/>
</dbReference>
<dbReference type="NCBIfam" id="NF004363">
    <property type="entry name" value="PRK05738.2-4"/>
    <property type="match status" value="1"/>
</dbReference>
<dbReference type="PANTHER" id="PTHR11620">
    <property type="entry name" value="60S RIBOSOMAL PROTEIN L23A"/>
    <property type="match status" value="1"/>
</dbReference>
<dbReference type="Pfam" id="PF00276">
    <property type="entry name" value="Ribosomal_L23"/>
    <property type="match status" value="1"/>
</dbReference>
<dbReference type="SUPFAM" id="SSF54189">
    <property type="entry name" value="Ribosomal proteins S24e, L23 and L15e"/>
    <property type="match status" value="1"/>
</dbReference>
<accession>Q5LLU8</accession>
<keyword id="KW-1185">Reference proteome</keyword>
<keyword id="KW-0687">Ribonucleoprotein</keyword>
<keyword id="KW-0689">Ribosomal protein</keyword>
<keyword id="KW-0694">RNA-binding</keyword>
<keyword id="KW-0699">rRNA-binding</keyword>
<protein>
    <recommendedName>
        <fullName evidence="1">Large ribosomal subunit protein uL23</fullName>
    </recommendedName>
    <alternativeName>
        <fullName evidence="2">50S ribosomal protein L23</fullName>
    </alternativeName>
</protein>
<feature type="chain" id="PRO_0000272847" description="Large ribosomal subunit protein uL23">
    <location>
        <begin position="1"/>
        <end position="98"/>
    </location>
</feature>
<evidence type="ECO:0000255" key="1">
    <source>
        <dbReference type="HAMAP-Rule" id="MF_01369"/>
    </source>
</evidence>
<evidence type="ECO:0000305" key="2"/>
<sequence length="98" mass="10753">MSAKAQHYDVIRKPIITEKSTMASENGAVVFEVSIDSNKPQIKEAVESLFGVKVKAVNTTITKGKVKRFRGQLGKRKDVKKAYVTLEEGNTIDVSTGL</sequence>
<reference key="1">
    <citation type="journal article" date="2004" name="Nature">
        <title>Genome sequence of Silicibacter pomeroyi reveals adaptations to the marine environment.</title>
        <authorList>
            <person name="Moran M.A."/>
            <person name="Buchan A."/>
            <person name="Gonzalez J.M."/>
            <person name="Heidelberg J.F."/>
            <person name="Whitman W.B."/>
            <person name="Kiene R.P."/>
            <person name="Henriksen J.R."/>
            <person name="King G.M."/>
            <person name="Belas R."/>
            <person name="Fuqua C."/>
            <person name="Brinkac L.M."/>
            <person name="Lewis M."/>
            <person name="Johri S."/>
            <person name="Weaver B."/>
            <person name="Pai G."/>
            <person name="Eisen J.A."/>
            <person name="Rahe E."/>
            <person name="Sheldon W.M."/>
            <person name="Ye W."/>
            <person name="Miller T.R."/>
            <person name="Carlton J."/>
            <person name="Rasko D.A."/>
            <person name="Paulsen I.T."/>
            <person name="Ren Q."/>
            <person name="Daugherty S.C."/>
            <person name="DeBoy R.T."/>
            <person name="Dodson R.J."/>
            <person name="Durkin A.S."/>
            <person name="Madupu R."/>
            <person name="Nelson W.C."/>
            <person name="Sullivan S.A."/>
            <person name="Rosovitz M.J."/>
            <person name="Haft D.H."/>
            <person name="Selengut J."/>
            <person name="Ward N."/>
        </authorList>
    </citation>
    <scope>NUCLEOTIDE SEQUENCE [LARGE SCALE GENOMIC DNA]</scope>
    <source>
        <strain>ATCC 700808 / DSM 15171 / DSS-3</strain>
    </source>
</reference>
<reference key="2">
    <citation type="journal article" date="2014" name="Stand. Genomic Sci.">
        <title>An updated genome annotation for the model marine bacterium Ruegeria pomeroyi DSS-3.</title>
        <authorList>
            <person name="Rivers A.R."/>
            <person name="Smith C.B."/>
            <person name="Moran M.A."/>
        </authorList>
    </citation>
    <scope>GENOME REANNOTATION</scope>
    <source>
        <strain>ATCC 700808 / DSM 15171 / DSS-3</strain>
    </source>
</reference>
<name>RL23_RUEPO</name>
<comment type="function">
    <text evidence="1">One of the early assembly proteins it binds 23S rRNA. One of the proteins that surrounds the polypeptide exit tunnel on the outside of the ribosome. Forms the main docking site for trigger factor binding to the ribosome.</text>
</comment>
<comment type="subunit">
    <text evidence="1">Part of the 50S ribosomal subunit. Contacts protein L29, and trigger factor when it is bound to the ribosome.</text>
</comment>
<comment type="similarity">
    <text evidence="1">Belongs to the universal ribosomal protein uL23 family.</text>
</comment>
<organism>
    <name type="scientific">Ruegeria pomeroyi (strain ATCC 700808 / DSM 15171 / DSS-3)</name>
    <name type="common">Silicibacter pomeroyi</name>
    <dbReference type="NCBI Taxonomy" id="246200"/>
    <lineage>
        <taxon>Bacteria</taxon>
        <taxon>Pseudomonadati</taxon>
        <taxon>Pseudomonadota</taxon>
        <taxon>Alphaproteobacteria</taxon>
        <taxon>Rhodobacterales</taxon>
        <taxon>Roseobacteraceae</taxon>
        <taxon>Ruegeria</taxon>
    </lineage>
</organism>
<proteinExistence type="inferred from homology"/>